<sequence length="152" mass="17176">MAAEGKSLKARAAELLSRREYTRQELVRRLAPFADSEDELNAALDELAASNWQSDDRFARQFASSKGTKFGSRRLAQEMRQRGVDSDTIREALSGQDDLASAREQWRKKFGRLPADAAEKARQYRFLAQRGFPADVIRQVLAGGADDDFYED</sequence>
<accession>Q7NXM0</accession>
<comment type="function">
    <text evidence="1">Modulates RecA activity.</text>
</comment>
<comment type="subcellular location">
    <subcellularLocation>
        <location evidence="1">Cytoplasm</location>
    </subcellularLocation>
</comment>
<comment type="similarity">
    <text evidence="1">Belongs to the RecX family.</text>
</comment>
<gene>
    <name evidence="1" type="primary">recX</name>
    <name type="ordered locus">CV_1606</name>
</gene>
<feature type="chain" id="PRO_1000065162" description="Regulatory protein RecX">
    <location>
        <begin position="1"/>
        <end position="152"/>
    </location>
</feature>
<organism>
    <name type="scientific">Chromobacterium violaceum (strain ATCC 12472 / DSM 30191 / JCM 1249 / CCUG 213 / NBRC 12614 / NCIMB 9131 / NCTC 9757 / MK)</name>
    <dbReference type="NCBI Taxonomy" id="243365"/>
    <lineage>
        <taxon>Bacteria</taxon>
        <taxon>Pseudomonadati</taxon>
        <taxon>Pseudomonadota</taxon>
        <taxon>Betaproteobacteria</taxon>
        <taxon>Neisseriales</taxon>
        <taxon>Chromobacteriaceae</taxon>
        <taxon>Chromobacterium</taxon>
    </lineage>
</organism>
<keyword id="KW-0963">Cytoplasm</keyword>
<keyword id="KW-1185">Reference proteome</keyword>
<name>RECX_CHRVO</name>
<dbReference type="EMBL" id="AE016825">
    <property type="protein sequence ID" value="AAQ59282.1"/>
    <property type="molecule type" value="Genomic_DNA"/>
</dbReference>
<dbReference type="RefSeq" id="WP_011135158.1">
    <property type="nucleotide sequence ID" value="NC_005085.1"/>
</dbReference>
<dbReference type="SMR" id="Q7NXM0"/>
<dbReference type="STRING" id="243365.CV_1606"/>
<dbReference type="GeneID" id="66367290"/>
<dbReference type="KEGG" id="cvi:CV_1606"/>
<dbReference type="eggNOG" id="COG2137">
    <property type="taxonomic scope" value="Bacteria"/>
</dbReference>
<dbReference type="HOGENOM" id="CLU_066607_3_1_4"/>
<dbReference type="OrthoDB" id="5295441at2"/>
<dbReference type="Proteomes" id="UP000001424">
    <property type="component" value="Chromosome"/>
</dbReference>
<dbReference type="GO" id="GO:0005737">
    <property type="term" value="C:cytoplasm"/>
    <property type="evidence" value="ECO:0007669"/>
    <property type="project" value="UniProtKB-SubCell"/>
</dbReference>
<dbReference type="GO" id="GO:0006282">
    <property type="term" value="P:regulation of DNA repair"/>
    <property type="evidence" value="ECO:0007669"/>
    <property type="project" value="UniProtKB-UniRule"/>
</dbReference>
<dbReference type="Gene3D" id="1.10.10.10">
    <property type="entry name" value="Winged helix-like DNA-binding domain superfamily/Winged helix DNA-binding domain"/>
    <property type="match status" value="3"/>
</dbReference>
<dbReference type="HAMAP" id="MF_01114">
    <property type="entry name" value="RecX"/>
    <property type="match status" value="1"/>
</dbReference>
<dbReference type="InterPro" id="IPR053924">
    <property type="entry name" value="RecX_HTH_2nd"/>
</dbReference>
<dbReference type="InterPro" id="IPR053925">
    <property type="entry name" value="RecX_HTH_3rd"/>
</dbReference>
<dbReference type="InterPro" id="IPR003783">
    <property type="entry name" value="Regulatory_RecX"/>
</dbReference>
<dbReference type="InterPro" id="IPR036388">
    <property type="entry name" value="WH-like_DNA-bd_sf"/>
</dbReference>
<dbReference type="NCBIfam" id="NF001055">
    <property type="entry name" value="PRK00117.2-5"/>
    <property type="match status" value="1"/>
</dbReference>
<dbReference type="PANTHER" id="PTHR33602">
    <property type="entry name" value="REGULATORY PROTEIN RECX FAMILY PROTEIN"/>
    <property type="match status" value="1"/>
</dbReference>
<dbReference type="PANTHER" id="PTHR33602:SF1">
    <property type="entry name" value="REGULATORY PROTEIN RECX FAMILY PROTEIN"/>
    <property type="match status" value="1"/>
</dbReference>
<dbReference type="Pfam" id="PF02631">
    <property type="entry name" value="RecX_HTH2"/>
    <property type="match status" value="1"/>
</dbReference>
<dbReference type="Pfam" id="PF21981">
    <property type="entry name" value="RecX_HTH3"/>
    <property type="match status" value="1"/>
</dbReference>
<protein>
    <recommendedName>
        <fullName evidence="1">Regulatory protein RecX</fullName>
    </recommendedName>
</protein>
<proteinExistence type="inferred from homology"/>
<evidence type="ECO:0000255" key="1">
    <source>
        <dbReference type="HAMAP-Rule" id="MF_01114"/>
    </source>
</evidence>
<reference key="1">
    <citation type="journal article" date="2003" name="Proc. Natl. Acad. Sci. U.S.A.">
        <title>The complete genome sequence of Chromobacterium violaceum reveals remarkable and exploitable bacterial adaptability.</title>
        <authorList>
            <person name="Vasconcelos A.T.R."/>
            <person name="de Almeida D.F."/>
            <person name="Hungria M."/>
            <person name="Guimaraes C.T."/>
            <person name="Antonio R.V."/>
            <person name="Almeida F.C."/>
            <person name="de Almeida L.G.P."/>
            <person name="de Almeida R."/>
            <person name="Alves-Gomes J.A."/>
            <person name="Andrade E.M."/>
            <person name="Araripe J."/>
            <person name="de Araujo M.F.F."/>
            <person name="Astolfi-Filho S."/>
            <person name="Azevedo V."/>
            <person name="Baptista A.J."/>
            <person name="Bataus L.A.M."/>
            <person name="Batista J.S."/>
            <person name="Belo A."/>
            <person name="van den Berg C."/>
            <person name="Bogo M."/>
            <person name="Bonatto S."/>
            <person name="Bordignon J."/>
            <person name="Brigido M.M."/>
            <person name="Brito C.A."/>
            <person name="Brocchi M."/>
            <person name="Burity H.A."/>
            <person name="Camargo A.A."/>
            <person name="Cardoso D.D.P."/>
            <person name="Carneiro N.P."/>
            <person name="Carraro D.M."/>
            <person name="Carvalho C.M.B."/>
            <person name="Cascardo J.C.M."/>
            <person name="Cavada B.S."/>
            <person name="Chueire L.M.O."/>
            <person name="Creczynski-Pasa T.B."/>
            <person name="Cunha-Junior N.C."/>
            <person name="Fagundes N."/>
            <person name="Falcao C.L."/>
            <person name="Fantinatti F."/>
            <person name="Farias I.P."/>
            <person name="Felipe M.S.S."/>
            <person name="Ferrari L.P."/>
            <person name="Ferro J.A."/>
            <person name="Ferro M.I.T."/>
            <person name="Franco G.R."/>
            <person name="Freitas N.S.A."/>
            <person name="Furlan L.R."/>
            <person name="Gazzinelli R.T."/>
            <person name="Gomes E.A."/>
            <person name="Goncalves P.R."/>
            <person name="Grangeiro T.B."/>
            <person name="Grattapaglia D."/>
            <person name="Grisard E.C."/>
            <person name="Hanna E.S."/>
            <person name="Jardim S.N."/>
            <person name="Laurino J."/>
            <person name="Leoi L.C.T."/>
            <person name="Lima L.F.A."/>
            <person name="Loureiro M.F."/>
            <person name="Lyra M.C.C.P."/>
            <person name="Madeira H.M.F."/>
            <person name="Manfio G.P."/>
            <person name="Maranhao A.Q."/>
            <person name="Martins W.S."/>
            <person name="di Mauro S.M.Z."/>
            <person name="de Medeiros S.R.B."/>
            <person name="Meissner R.V."/>
            <person name="Moreira M.A.M."/>
            <person name="Nascimento F.F."/>
            <person name="Nicolas M.F."/>
            <person name="Oliveira J.G."/>
            <person name="Oliveira S.C."/>
            <person name="Paixao R.F.C."/>
            <person name="Parente J.A."/>
            <person name="Pedrosa F.O."/>
            <person name="Pena S.D.J."/>
            <person name="Pereira J.O."/>
            <person name="Pereira M."/>
            <person name="Pinto L.S.R.C."/>
            <person name="Pinto L.S."/>
            <person name="Porto J.I.R."/>
            <person name="Potrich D.P."/>
            <person name="Ramalho-Neto C.E."/>
            <person name="Reis A.M.M."/>
            <person name="Rigo L.U."/>
            <person name="Rondinelli E."/>
            <person name="Santos E.B.P."/>
            <person name="Santos F.R."/>
            <person name="Schneider M.P.C."/>
            <person name="Seuanez H.N."/>
            <person name="Silva A.M.R."/>
            <person name="da Silva A.L.C."/>
            <person name="Silva D.W."/>
            <person name="Silva R."/>
            <person name="Simoes I.C."/>
            <person name="Simon D."/>
            <person name="Soares C.M.A."/>
            <person name="Soares R.B.A."/>
            <person name="Souza E.M."/>
            <person name="Souza K.R.L."/>
            <person name="Souza R.C."/>
            <person name="Steffens M.B.R."/>
            <person name="Steindel M."/>
            <person name="Teixeira S.R."/>
            <person name="Urmenyi T."/>
            <person name="Vettore A."/>
            <person name="Wassem R."/>
            <person name="Zaha A."/>
            <person name="Simpson A.J.G."/>
        </authorList>
    </citation>
    <scope>NUCLEOTIDE SEQUENCE [LARGE SCALE GENOMIC DNA]</scope>
    <source>
        <strain>ATCC 12472 / DSM 30191 / JCM 1249 / CCUG 213 / NBRC 12614 / NCIMB 9131 / NCTC 9757 / MK</strain>
    </source>
</reference>